<reference evidence="13 14" key="1">
    <citation type="journal article" date="1997" name="J. Biol. Chem.">
        <title>Molecular cloning and functional expression of a cDNA encoding a new member of mixed lineage protein kinase from human brain.</title>
        <authorList>
            <person name="Sakuma H."/>
            <person name="Ikeda A."/>
            <person name="Oka S."/>
            <person name="Kozutsumi Y."/>
            <person name="Zanetta J."/>
            <person name="Kawasaki T."/>
        </authorList>
    </citation>
    <scope>NUCLEOTIDE SEQUENCE [MRNA] (ISOFORM 1)</scope>
    <scope>FUNCTION</scope>
    <scope>CATALYTIC ACTIVITY</scope>
    <scope>ACTIVITY REGULATION</scope>
    <scope>SUBCELLULAR LOCATION</scope>
    <scope>TISSUE SPECIFICITY</scope>
    <scope>AUTOPHOSPHORYLATION</scope>
    <source>
        <tissue evidence="10">Cerebellum</tissue>
    </source>
</reference>
<reference key="2">
    <citation type="journal article" date="2004" name="Nat. Genet.">
        <title>Complete sequencing and characterization of 21,243 full-length human cDNAs.</title>
        <authorList>
            <person name="Ota T."/>
            <person name="Suzuki Y."/>
            <person name="Nishikawa T."/>
            <person name="Otsuki T."/>
            <person name="Sugiyama T."/>
            <person name="Irie R."/>
            <person name="Wakamatsu A."/>
            <person name="Hayashi K."/>
            <person name="Sato H."/>
            <person name="Nagai K."/>
            <person name="Kimura K."/>
            <person name="Makita H."/>
            <person name="Sekine M."/>
            <person name="Obayashi M."/>
            <person name="Nishi T."/>
            <person name="Shibahara T."/>
            <person name="Tanaka T."/>
            <person name="Ishii S."/>
            <person name="Yamamoto J."/>
            <person name="Saito K."/>
            <person name="Kawai Y."/>
            <person name="Isono Y."/>
            <person name="Nakamura Y."/>
            <person name="Nagahari K."/>
            <person name="Murakami K."/>
            <person name="Yasuda T."/>
            <person name="Iwayanagi T."/>
            <person name="Wagatsuma M."/>
            <person name="Shiratori A."/>
            <person name="Sudo H."/>
            <person name="Hosoiri T."/>
            <person name="Kaku Y."/>
            <person name="Kodaira H."/>
            <person name="Kondo H."/>
            <person name="Sugawara M."/>
            <person name="Takahashi M."/>
            <person name="Kanda K."/>
            <person name="Yokoi T."/>
            <person name="Furuya T."/>
            <person name="Kikkawa E."/>
            <person name="Omura Y."/>
            <person name="Abe K."/>
            <person name="Kamihara K."/>
            <person name="Katsuta N."/>
            <person name="Sato K."/>
            <person name="Tanikawa M."/>
            <person name="Yamazaki M."/>
            <person name="Ninomiya K."/>
            <person name="Ishibashi T."/>
            <person name="Yamashita H."/>
            <person name="Murakawa K."/>
            <person name="Fujimori K."/>
            <person name="Tanai H."/>
            <person name="Kimata M."/>
            <person name="Watanabe M."/>
            <person name="Hiraoka S."/>
            <person name="Chiba Y."/>
            <person name="Ishida S."/>
            <person name="Ono Y."/>
            <person name="Takiguchi S."/>
            <person name="Watanabe S."/>
            <person name="Yosida M."/>
            <person name="Hotuta T."/>
            <person name="Kusano J."/>
            <person name="Kanehori K."/>
            <person name="Takahashi-Fujii A."/>
            <person name="Hara H."/>
            <person name="Tanase T.-O."/>
            <person name="Nomura Y."/>
            <person name="Togiya S."/>
            <person name="Komai F."/>
            <person name="Hara R."/>
            <person name="Takeuchi K."/>
            <person name="Arita M."/>
            <person name="Imose N."/>
            <person name="Musashino K."/>
            <person name="Yuuki H."/>
            <person name="Oshima A."/>
            <person name="Sasaki N."/>
            <person name="Aotsuka S."/>
            <person name="Yoshikawa Y."/>
            <person name="Matsunawa H."/>
            <person name="Ichihara T."/>
            <person name="Shiohata N."/>
            <person name="Sano S."/>
            <person name="Moriya S."/>
            <person name="Momiyama H."/>
            <person name="Satoh N."/>
            <person name="Takami S."/>
            <person name="Terashima Y."/>
            <person name="Suzuki O."/>
            <person name="Nakagawa S."/>
            <person name="Senoh A."/>
            <person name="Mizoguchi H."/>
            <person name="Goto Y."/>
            <person name="Shimizu F."/>
            <person name="Wakebe H."/>
            <person name="Hishigaki H."/>
            <person name="Watanabe T."/>
            <person name="Sugiyama A."/>
            <person name="Takemoto M."/>
            <person name="Kawakami B."/>
            <person name="Yamazaki M."/>
            <person name="Watanabe K."/>
            <person name="Kumagai A."/>
            <person name="Itakura S."/>
            <person name="Fukuzumi Y."/>
            <person name="Fujimori Y."/>
            <person name="Komiyama M."/>
            <person name="Tashiro H."/>
            <person name="Tanigami A."/>
            <person name="Fujiwara T."/>
            <person name="Ono T."/>
            <person name="Yamada K."/>
            <person name="Fujii Y."/>
            <person name="Ozaki K."/>
            <person name="Hirao M."/>
            <person name="Ohmori Y."/>
            <person name="Kawabata A."/>
            <person name="Hikiji T."/>
            <person name="Kobatake N."/>
            <person name="Inagaki H."/>
            <person name="Ikema Y."/>
            <person name="Okamoto S."/>
            <person name="Okitani R."/>
            <person name="Kawakami T."/>
            <person name="Noguchi S."/>
            <person name="Itoh T."/>
            <person name="Shigeta K."/>
            <person name="Senba T."/>
            <person name="Matsumura K."/>
            <person name="Nakajima Y."/>
            <person name="Mizuno T."/>
            <person name="Morinaga M."/>
            <person name="Sasaki M."/>
            <person name="Togashi T."/>
            <person name="Oyama M."/>
            <person name="Hata H."/>
            <person name="Watanabe M."/>
            <person name="Komatsu T."/>
            <person name="Mizushima-Sugano J."/>
            <person name="Satoh T."/>
            <person name="Shirai Y."/>
            <person name="Takahashi Y."/>
            <person name="Nakagawa K."/>
            <person name="Okumura K."/>
            <person name="Nagase T."/>
            <person name="Nomura N."/>
            <person name="Kikuchi H."/>
            <person name="Masuho Y."/>
            <person name="Yamashita R."/>
            <person name="Nakai K."/>
            <person name="Yada T."/>
            <person name="Nakamura Y."/>
            <person name="Ohara O."/>
            <person name="Isogai T."/>
            <person name="Sugano S."/>
        </authorList>
    </citation>
    <scope>NUCLEOTIDE SEQUENCE [LARGE SCALE MRNA] (ISOFORMS 1; 3 AND 4)</scope>
    <source>
        <tissue>Brain</tissue>
        <tissue>Testis</tissue>
        <tissue>Tongue</tissue>
    </source>
</reference>
<reference key="3">
    <citation type="journal article" date="2006" name="Nature">
        <title>The DNA sequence, annotation and analysis of human chromosome 3.</title>
        <authorList>
            <person name="Muzny D.M."/>
            <person name="Scherer S.E."/>
            <person name="Kaul R."/>
            <person name="Wang J."/>
            <person name="Yu J."/>
            <person name="Sudbrak R."/>
            <person name="Buhay C.J."/>
            <person name="Chen R."/>
            <person name="Cree A."/>
            <person name="Ding Y."/>
            <person name="Dugan-Rocha S."/>
            <person name="Gill R."/>
            <person name="Gunaratne P."/>
            <person name="Harris R.A."/>
            <person name="Hawes A.C."/>
            <person name="Hernandez J."/>
            <person name="Hodgson A.V."/>
            <person name="Hume J."/>
            <person name="Jackson A."/>
            <person name="Khan Z.M."/>
            <person name="Kovar-Smith C."/>
            <person name="Lewis L.R."/>
            <person name="Lozado R.J."/>
            <person name="Metzker M.L."/>
            <person name="Milosavljevic A."/>
            <person name="Miner G.R."/>
            <person name="Morgan M.B."/>
            <person name="Nazareth L.V."/>
            <person name="Scott G."/>
            <person name="Sodergren E."/>
            <person name="Song X.-Z."/>
            <person name="Steffen D."/>
            <person name="Wei S."/>
            <person name="Wheeler D.A."/>
            <person name="Wright M.W."/>
            <person name="Worley K.C."/>
            <person name="Yuan Y."/>
            <person name="Zhang Z."/>
            <person name="Adams C.Q."/>
            <person name="Ansari-Lari M.A."/>
            <person name="Ayele M."/>
            <person name="Brown M.J."/>
            <person name="Chen G."/>
            <person name="Chen Z."/>
            <person name="Clendenning J."/>
            <person name="Clerc-Blankenburg K.P."/>
            <person name="Chen R."/>
            <person name="Chen Z."/>
            <person name="Davis C."/>
            <person name="Delgado O."/>
            <person name="Dinh H.H."/>
            <person name="Dong W."/>
            <person name="Draper H."/>
            <person name="Ernst S."/>
            <person name="Fu G."/>
            <person name="Gonzalez-Garay M.L."/>
            <person name="Garcia D.K."/>
            <person name="Gillett W."/>
            <person name="Gu J."/>
            <person name="Hao B."/>
            <person name="Haugen E."/>
            <person name="Havlak P."/>
            <person name="He X."/>
            <person name="Hennig S."/>
            <person name="Hu S."/>
            <person name="Huang W."/>
            <person name="Jackson L.R."/>
            <person name="Jacob L.S."/>
            <person name="Kelly S.H."/>
            <person name="Kube M."/>
            <person name="Levy R."/>
            <person name="Li Z."/>
            <person name="Liu B."/>
            <person name="Liu J."/>
            <person name="Liu W."/>
            <person name="Lu J."/>
            <person name="Maheshwari M."/>
            <person name="Nguyen B.-V."/>
            <person name="Okwuonu G.O."/>
            <person name="Palmeiri A."/>
            <person name="Pasternak S."/>
            <person name="Perez L.M."/>
            <person name="Phelps K.A."/>
            <person name="Plopper F.J."/>
            <person name="Qiang B."/>
            <person name="Raymond C."/>
            <person name="Rodriguez R."/>
            <person name="Saenphimmachak C."/>
            <person name="Santibanez J."/>
            <person name="Shen H."/>
            <person name="Shen Y."/>
            <person name="Subramanian S."/>
            <person name="Tabor P.E."/>
            <person name="Verduzco D."/>
            <person name="Waldron L."/>
            <person name="Wang J."/>
            <person name="Wang J."/>
            <person name="Wang Q."/>
            <person name="Williams G.A."/>
            <person name="Wong G.K.-S."/>
            <person name="Yao Z."/>
            <person name="Zhang J."/>
            <person name="Zhang X."/>
            <person name="Zhao G."/>
            <person name="Zhou J."/>
            <person name="Zhou Y."/>
            <person name="Nelson D."/>
            <person name="Lehrach H."/>
            <person name="Reinhardt R."/>
            <person name="Naylor S.L."/>
            <person name="Yang H."/>
            <person name="Olson M."/>
            <person name="Weinstock G."/>
            <person name="Gibbs R.A."/>
        </authorList>
    </citation>
    <scope>NUCLEOTIDE SEQUENCE [LARGE SCALE GENOMIC DNA]</scope>
</reference>
<reference key="4">
    <citation type="submission" date="2005-09" db="EMBL/GenBank/DDBJ databases">
        <authorList>
            <person name="Mural R.J."/>
            <person name="Istrail S."/>
            <person name="Sutton G.G."/>
            <person name="Florea L."/>
            <person name="Halpern A.L."/>
            <person name="Mobarry C.M."/>
            <person name="Lippert R."/>
            <person name="Walenz B."/>
            <person name="Shatkay H."/>
            <person name="Dew I."/>
            <person name="Miller J.R."/>
            <person name="Flanigan M.J."/>
            <person name="Edwards N.J."/>
            <person name="Bolanos R."/>
            <person name="Fasulo D."/>
            <person name="Halldorsson B.V."/>
            <person name="Hannenhalli S."/>
            <person name="Turner R."/>
            <person name="Yooseph S."/>
            <person name="Lu F."/>
            <person name="Nusskern D.R."/>
            <person name="Shue B.C."/>
            <person name="Zheng X.H."/>
            <person name="Zhong F."/>
            <person name="Delcher A.L."/>
            <person name="Huson D.H."/>
            <person name="Kravitz S.A."/>
            <person name="Mouchard L."/>
            <person name="Reinert K."/>
            <person name="Remington K.A."/>
            <person name="Clark A.G."/>
            <person name="Waterman M.S."/>
            <person name="Eichler E.E."/>
            <person name="Adams M.D."/>
            <person name="Hunkapiller M.W."/>
            <person name="Myers E.W."/>
            <person name="Venter J.C."/>
        </authorList>
    </citation>
    <scope>NUCLEOTIDE SEQUENCE [LARGE SCALE GENOMIC DNA]</scope>
</reference>
<reference key="5">
    <citation type="journal article" date="2004" name="Genome Res.">
        <title>The status, quality, and expansion of the NIH full-length cDNA project: the Mammalian Gene Collection (MGC).</title>
        <authorList>
            <consortium name="The MGC Project Team"/>
        </authorList>
    </citation>
    <scope>NUCLEOTIDE SEQUENCE [LARGE SCALE MRNA] (ISOFORMS 2 AND 5)</scope>
    <source>
        <tissue>Brain</tissue>
    </source>
</reference>
<reference key="6">
    <citation type="journal article" date="1993" name="Cell Growth Differ.">
        <title>Identification of 21 novel human protein kinases, including 3 members of a family related to the cell cycle regulator nimA of Aspergillus nidulans.</title>
        <authorList>
            <person name="Schultz S.J."/>
            <person name="Nigg E.A."/>
        </authorList>
    </citation>
    <scope>NUCLEOTIDE SEQUENCE [MRNA] OF 230-340 (ISOFORM 1)</scope>
</reference>
<reference evidence="13" key="7">
    <citation type="journal article" date="2001" name="FEBS Lett.">
        <title>Identification and characterization of functional domains in a mixed lineage kinase LZK.</title>
        <authorList>
            <person name="Ikeda A."/>
            <person name="Masaki M."/>
            <person name="Kozutsumi Y."/>
            <person name="Oka S."/>
            <person name="Kawasaki T."/>
        </authorList>
    </citation>
    <scope>HOMODIMERIZATION</scope>
</reference>
<reference evidence="13" key="8">
    <citation type="journal article" date="2001" name="J. Biochem.">
        <title>Mixed lineage kinase LZK forms a functional signaling complex with JIP-1, a scaffold protein of the c-Jun NH(2)-terminal kinase pathway.</title>
        <authorList>
            <person name="Ikeda A."/>
            <person name="Hasegawa K."/>
            <person name="Masaki M."/>
            <person name="Moriguchi T."/>
            <person name="Nishida E."/>
            <person name="Kozutsumi Y."/>
            <person name="Oka S."/>
            <person name="Kawasaki T."/>
        </authorList>
    </citation>
    <scope>FUNCTION</scope>
    <scope>INTERACTION WITH MAPK8IP1</scope>
</reference>
<reference evidence="13" key="9">
    <citation type="journal article" date="2003" name="Eur. J. Biochem.">
        <title>Mixed lineage kinase LZK and antioxidant protein-1 activate NF-kappaB synergistically.</title>
        <authorList>
            <person name="Masaki M."/>
            <person name="Ikeda A."/>
            <person name="Shiraki E."/>
            <person name="Oka S."/>
            <person name="Kawasaki T."/>
        </authorList>
    </citation>
    <scope>FUNCTION</scope>
    <scope>INTERACTION WITH PRDX3</scope>
    <scope>MUTAGENESIS OF LYS-195</scope>
</reference>
<reference key="10">
    <citation type="journal article" date="2007" name="Nature">
        <title>Patterns of somatic mutation in human cancer genomes.</title>
        <authorList>
            <person name="Greenman C."/>
            <person name="Stephens P."/>
            <person name="Smith R."/>
            <person name="Dalgliesh G.L."/>
            <person name="Hunter C."/>
            <person name="Bignell G."/>
            <person name="Davies H."/>
            <person name="Teague J."/>
            <person name="Butler A."/>
            <person name="Stevens C."/>
            <person name="Edkins S."/>
            <person name="O'Meara S."/>
            <person name="Vastrik I."/>
            <person name="Schmidt E.E."/>
            <person name="Avis T."/>
            <person name="Barthorpe S."/>
            <person name="Bhamra G."/>
            <person name="Buck G."/>
            <person name="Choudhury B."/>
            <person name="Clements J."/>
            <person name="Cole J."/>
            <person name="Dicks E."/>
            <person name="Forbes S."/>
            <person name="Gray K."/>
            <person name="Halliday K."/>
            <person name="Harrison R."/>
            <person name="Hills K."/>
            <person name="Hinton J."/>
            <person name="Jenkinson A."/>
            <person name="Jones D."/>
            <person name="Menzies A."/>
            <person name="Mironenko T."/>
            <person name="Perry J."/>
            <person name="Raine K."/>
            <person name="Richardson D."/>
            <person name="Shepherd R."/>
            <person name="Small A."/>
            <person name="Tofts C."/>
            <person name="Varian J."/>
            <person name="Webb T."/>
            <person name="West S."/>
            <person name="Widaa S."/>
            <person name="Yates A."/>
            <person name="Cahill D.P."/>
            <person name="Louis D.N."/>
            <person name="Goldstraw P."/>
            <person name="Nicholson A.G."/>
            <person name="Brasseur F."/>
            <person name="Looijenga L."/>
            <person name="Weber B.L."/>
            <person name="Chiew Y.-E."/>
            <person name="DeFazio A."/>
            <person name="Greaves M.F."/>
            <person name="Green A.R."/>
            <person name="Campbell P."/>
            <person name="Birney E."/>
            <person name="Easton D.F."/>
            <person name="Chenevix-Trench G."/>
            <person name="Tan M.-H."/>
            <person name="Khoo S.K."/>
            <person name="Teh B.T."/>
            <person name="Yuen S.T."/>
            <person name="Leung S.Y."/>
            <person name="Wooster R."/>
            <person name="Futreal P.A."/>
            <person name="Stratton M.R."/>
        </authorList>
    </citation>
    <scope>VARIANTS [LARGE SCALE ANALYSIS] GLY-517; LYS-712 AND LEU-746</scope>
</reference>
<proteinExistence type="evidence at protein level"/>
<sequence>MANFQEHLSCSSSPHLPFSESKTFNGLQDELTAMGNHPSPKLLEDQQEKGMVRTELIESVHSPVTTTVLTSVSEDSRDQFENSVLQLREHDESETAVSQGNSNTVDGESTSGTEDIKIQFSRSGSGSGGFLEGLFGCLRPVWNIIGKAYSTDYKLQQQDTWEVPFEEISELQWLGSGAQGAVFLGKFRAEEVAIKKVREQNETDIKHLRKLKHPNIIAFKGVCTQAPCYCIIMEYCAHGQLYEVLRAGRKITPRLLVDWSTGIASGMNYLHLHKIIHRDLKSPNVLVTHTDAVKISDFGTSKELSDKSTKMSFAGTVAWMAPEVIRNEPVSEKVDIWSFGVVLWELLTGEIPYKDVDSSAIIWGVGSNSLHLPVPSTCPDGFKILMKQTWQSKPRNRPSFRQTLMHLDIASADVLATPQETYFKSQAEWREEVKKHFEKIKSEGTCIHRLDEELIRRRREELRHALDIREHYERKLERANNLYMELSAIMLQLEMREKELIKREQAVEKKYPGTYKRHPVRPIIHPNAMEKLMKRKGVPHKSGMQTKRPDLLRSEGIPTTEVAPTASPLSGSPKMSTSSSKSRYRSKPRHRRGNSRGSHSDFAAILKNQPAQENSPHPTYLHQAQSQYPSLHHHNSLQQQYQQPPPAMSQSHHPRLNMHGQDIATCANNLRYFGPAAALRSPLSNHAQRQLPGSSPDLISTAMAADCWRSSEPDKGQAGPWGCCQADAYDPCLQCRPEQYGSLDIPSAEPVGRSPDLSKSPAHNPLLENAQSSEKTEENEFSGCRSESSLGTSHLGTPPALPRKTRPLQKSGDDSSEEEEGEVDSEVEFPRRQRPHRCISSCQSYSTFSSENFSVSDGEEGNTSDHSNSPDELADKLEDRLAEKLDDLLSQTPEIPIDISSHSDGLSDKECAVRRVKTQMSLGKLCVEERGYENPMQFEESDCDSSDGECSDATVRTNKHYSSATW</sequence>
<organism>
    <name type="scientific">Homo sapiens</name>
    <name type="common">Human</name>
    <dbReference type="NCBI Taxonomy" id="9606"/>
    <lineage>
        <taxon>Eukaryota</taxon>
        <taxon>Metazoa</taxon>
        <taxon>Chordata</taxon>
        <taxon>Craniata</taxon>
        <taxon>Vertebrata</taxon>
        <taxon>Euteleostomi</taxon>
        <taxon>Mammalia</taxon>
        <taxon>Eutheria</taxon>
        <taxon>Euarchontoglires</taxon>
        <taxon>Primates</taxon>
        <taxon>Haplorrhini</taxon>
        <taxon>Catarrhini</taxon>
        <taxon>Hominidae</taxon>
        <taxon>Homo</taxon>
    </lineage>
</organism>
<accession>O43283</accession>
<accession>B2R6U2</accession>
<accession>B4DLE3</accession>
<accession>B4DMV2</accession>
<accession>B4DZJ4</accession>
<accession>D3DNU1</accession>
<accession>Q05BY6</accession>
<accession>Q15450</accession>
<accession>Q2NKN3</accession>
<evidence type="ECO:0000250" key="1">
    <source>
        <dbReference type="UniProtKB" id="Q12852"/>
    </source>
</evidence>
<evidence type="ECO:0000250" key="2">
    <source>
        <dbReference type="UniProtKB" id="Q60700"/>
    </source>
</evidence>
<evidence type="ECO:0000255" key="3">
    <source>
        <dbReference type="PROSITE-ProRule" id="PRU00159"/>
    </source>
</evidence>
<evidence type="ECO:0000255" key="4">
    <source>
        <dbReference type="PROSITE-ProRule" id="PRU10027"/>
    </source>
</evidence>
<evidence type="ECO:0000256" key="5">
    <source>
        <dbReference type="SAM" id="MobiDB-lite"/>
    </source>
</evidence>
<evidence type="ECO:0000269" key="6">
    <source>
    </source>
</evidence>
<evidence type="ECO:0000269" key="7">
    <source>
    </source>
</evidence>
<evidence type="ECO:0000269" key="8">
    <source>
    </source>
</evidence>
<evidence type="ECO:0000269" key="9">
    <source>
    </source>
</evidence>
<evidence type="ECO:0000269" key="10">
    <source>
    </source>
</evidence>
<evidence type="ECO:0000303" key="11">
    <source>
    </source>
</evidence>
<evidence type="ECO:0000303" key="12">
    <source>
    </source>
</evidence>
<evidence type="ECO:0000305" key="13"/>
<evidence type="ECO:0000312" key="14">
    <source>
        <dbReference type="EMBL" id="BAA24817.1"/>
    </source>
</evidence>
<evidence type="ECO:0000312" key="15">
    <source>
        <dbReference type="HGNC" id="HGNC:6852"/>
    </source>
</evidence>
<feature type="chain" id="PRO_0000086264" description="Mitogen-activated protein kinase kinase kinase 13">
    <location>
        <begin position="1"/>
        <end position="966"/>
    </location>
</feature>
<feature type="domain" description="Protein kinase" evidence="3">
    <location>
        <begin position="168"/>
        <end position="409"/>
    </location>
</feature>
<feature type="region of interest" description="Disordered" evidence="5">
    <location>
        <begin position="1"/>
        <end position="22"/>
    </location>
</feature>
<feature type="region of interest" description="Disordered" evidence="5">
    <location>
        <begin position="30"/>
        <end position="49"/>
    </location>
</feature>
<feature type="region of interest" description="Disordered" evidence="5">
    <location>
        <begin position="90"/>
        <end position="114"/>
    </location>
</feature>
<feature type="region of interest" description="Leucine-zipper 1">
    <location>
        <begin position="433"/>
        <end position="454"/>
    </location>
</feature>
<feature type="region of interest" description="Leucine-zipper 2">
    <location>
        <begin position="486"/>
        <end position="507"/>
    </location>
</feature>
<feature type="region of interest" description="Disordered" evidence="5">
    <location>
        <begin position="534"/>
        <end position="599"/>
    </location>
</feature>
<feature type="region of interest" description="Disordered" evidence="5">
    <location>
        <begin position="611"/>
        <end position="655"/>
    </location>
</feature>
<feature type="region of interest" description="Disordered" evidence="5">
    <location>
        <begin position="744"/>
        <end position="834"/>
    </location>
</feature>
<feature type="region of interest" description="Acidic" evidence="13">
    <location>
        <begin position="815"/>
        <end position="828"/>
    </location>
</feature>
<feature type="region of interest" description="Disordered" evidence="5">
    <location>
        <begin position="846"/>
        <end position="908"/>
    </location>
</feature>
<feature type="compositionally biased region" description="Polar residues" evidence="5">
    <location>
        <begin position="95"/>
        <end position="113"/>
    </location>
</feature>
<feature type="compositionally biased region" description="Low complexity" evidence="5">
    <location>
        <begin position="567"/>
        <end position="581"/>
    </location>
</feature>
<feature type="compositionally biased region" description="Basic residues" evidence="5">
    <location>
        <begin position="582"/>
        <end position="594"/>
    </location>
</feature>
<feature type="compositionally biased region" description="Polar residues" evidence="5">
    <location>
        <begin position="611"/>
        <end position="629"/>
    </location>
</feature>
<feature type="compositionally biased region" description="Polar residues" evidence="5">
    <location>
        <begin position="785"/>
        <end position="795"/>
    </location>
</feature>
<feature type="compositionally biased region" description="Acidic residues" evidence="5">
    <location>
        <begin position="814"/>
        <end position="827"/>
    </location>
</feature>
<feature type="compositionally biased region" description="Polar residues" evidence="5">
    <location>
        <begin position="846"/>
        <end position="855"/>
    </location>
</feature>
<feature type="compositionally biased region" description="Basic and acidic residues" evidence="5">
    <location>
        <begin position="873"/>
        <end position="887"/>
    </location>
</feature>
<feature type="active site" description="Proton acceptor" evidence="1 3 4">
    <location>
        <position position="279"/>
    </location>
</feature>
<feature type="binding site" evidence="1 3">
    <location>
        <begin position="174"/>
        <end position="182"/>
    </location>
    <ligand>
        <name>ATP</name>
        <dbReference type="ChEBI" id="CHEBI:30616"/>
    </ligand>
</feature>
<feature type="binding site" evidence="2 3">
    <location>
        <position position="195"/>
    </location>
    <ligand>
        <name>ATP</name>
        <dbReference type="ChEBI" id="CHEBI:30616"/>
    </ligand>
</feature>
<feature type="splice variant" id="VSP_036562" description="In isoform 4." evidence="11">
    <location>
        <begin position="1"/>
        <end position="207"/>
    </location>
</feature>
<feature type="splice variant" id="VSP_036563" description="In isoform 3." evidence="11">
    <location>
        <begin position="1"/>
        <end position="144"/>
    </location>
</feature>
<feature type="splice variant" id="VSP_036564" description="In isoform 5." evidence="12">
    <original>RSGSGSG</original>
    <variation>RYLGSAI</variation>
    <location>
        <begin position="122"/>
        <end position="128"/>
    </location>
</feature>
<feature type="splice variant" id="VSP_036565" description="In isoform 5." evidence="12">
    <location>
        <begin position="129"/>
        <end position="966"/>
    </location>
</feature>
<feature type="splice variant" id="VSP_036566" description="In isoform 3." evidence="11">
    <original>IGKAYSTDYKLQQQD</original>
    <variation>MSYVECKCLQLENKN</variation>
    <location>
        <begin position="145"/>
        <end position="159"/>
    </location>
</feature>
<feature type="splice variant" id="VSP_036567" description="In isoform 2." evidence="12">
    <original>DT</original>
    <variation>VF</variation>
    <location>
        <begin position="159"/>
        <end position="160"/>
    </location>
</feature>
<feature type="splice variant" id="VSP_036568" description="In isoform 2." evidence="12">
    <location>
        <begin position="161"/>
        <end position="966"/>
    </location>
</feature>
<feature type="splice variant" id="VSP_036569" description="In isoform 4." evidence="11">
    <original>LRKLKHPNIIAFK</original>
    <variation>MYCGIQILALWER</variation>
    <location>
        <begin position="208"/>
        <end position="220"/>
    </location>
</feature>
<feature type="sequence variant" id="VAR_051640" description="In dbSNP:rs35266179.">
    <original>E</original>
    <variation>K</variation>
    <location>
        <position position="44"/>
    </location>
</feature>
<feature type="sequence variant" id="VAR_040708" description="In dbSNP:rs56408536." evidence="9">
    <original>R</original>
    <variation>G</variation>
    <location>
        <position position="517"/>
    </location>
</feature>
<feature type="sequence variant" id="VAR_040709" description="In dbSNP:rs56309231." evidence="9">
    <original>E</original>
    <variation>K</variation>
    <location>
        <position position="712"/>
    </location>
</feature>
<feature type="sequence variant" id="VAR_040710" description="In a metastatic melanoma sample; somatic mutation." evidence="9">
    <original>P</original>
    <variation>L</variation>
    <location>
        <position position="746"/>
    </location>
</feature>
<feature type="sequence variant" id="VAR_030577" description="In dbSNP:rs3732576.">
    <original>R</original>
    <variation>H</variation>
    <location>
        <position position="915"/>
    </location>
</feature>
<feature type="mutagenesis site" description="Kinase inactive. Fails to activate NF-kappa-B." evidence="8">
    <original>K</original>
    <variation>A</variation>
    <location>
        <position position="195"/>
    </location>
</feature>
<feature type="sequence conflict" description="In Ref. 2; BAG59505." evidence="13" ref="2">
    <original>D</original>
    <variation>G</variation>
    <location>
        <position position="106"/>
    </location>
</feature>
<feature type="sequence conflict" description="In Ref. 6; CAA80915." evidence="13" ref="6">
    <original>CII</original>
    <variation>YLY</variation>
    <location>
        <begin position="230"/>
        <end position="232"/>
    </location>
</feature>
<feature type="sequence conflict" description="In Ref. 2; BAG59505." evidence="13" ref="2">
    <original>N</original>
    <variation>D</variation>
    <location>
        <position position="268"/>
    </location>
</feature>
<feature type="sequence conflict" description="In Ref. 6; CAA80915." evidence="13" ref="6">
    <original>FG</original>
    <variation>MV</variation>
    <location>
        <begin position="339"/>
        <end position="340"/>
    </location>
</feature>
<feature type="sequence conflict" description="In Ref. 2; BAG64106." evidence="13" ref="2">
    <original>E</original>
    <variation>G</variation>
    <location>
        <position position="508"/>
    </location>
</feature>
<feature type="sequence conflict" description="In Ref. 2; BAG60014." evidence="13" ref="2">
    <original>G</original>
    <variation>R</variation>
    <location>
        <position position="821"/>
    </location>
</feature>
<dbReference type="EC" id="2.7.11.25"/>
<dbReference type="EMBL" id="AB001872">
    <property type="protein sequence ID" value="BAA24817.1"/>
    <property type="molecule type" value="mRNA"/>
</dbReference>
<dbReference type="EMBL" id="AK296961">
    <property type="protein sequence ID" value="BAG59505.1"/>
    <property type="status" value="ALT_SEQ"/>
    <property type="molecule type" value="mRNA"/>
</dbReference>
<dbReference type="EMBL" id="AK297646">
    <property type="protein sequence ID" value="BAG60014.1"/>
    <property type="molecule type" value="mRNA"/>
</dbReference>
<dbReference type="EMBL" id="AK302951">
    <property type="protein sequence ID" value="BAG64106.1"/>
    <property type="molecule type" value="mRNA"/>
</dbReference>
<dbReference type="EMBL" id="AK312714">
    <property type="protein sequence ID" value="BAG35589.1"/>
    <property type="molecule type" value="mRNA"/>
</dbReference>
<dbReference type="EMBL" id="AC099661">
    <property type="status" value="NOT_ANNOTATED_CDS"/>
    <property type="molecule type" value="Genomic_DNA"/>
</dbReference>
<dbReference type="EMBL" id="AC128680">
    <property type="status" value="NOT_ANNOTATED_CDS"/>
    <property type="molecule type" value="Genomic_DNA"/>
</dbReference>
<dbReference type="EMBL" id="AC132516">
    <property type="status" value="NOT_ANNOTATED_CDS"/>
    <property type="molecule type" value="Genomic_DNA"/>
</dbReference>
<dbReference type="EMBL" id="CH471052">
    <property type="protein sequence ID" value="EAW78224.1"/>
    <property type="molecule type" value="Genomic_DNA"/>
</dbReference>
<dbReference type="EMBL" id="CH471052">
    <property type="protein sequence ID" value="EAW78225.1"/>
    <property type="molecule type" value="Genomic_DNA"/>
</dbReference>
<dbReference type="EMBL" id="BC031677">
    <property type="protein sequence ID" value="AAH31677.1"/>
    <property type="molecule type" value="mRNA"/>
</dbReference>
<dbReference type="EMBL" id="BC111726">
    <property type="protein sequence ID" value="AAI11727.1"/>
    <property type="status" value="ALT_SEQ"/>
    <property type="molecule type" value="mRNA"/>
</dbReference>
<dbReference type="EMBL" id="Z25428">
    <property type="protein sequence ID" value="CAA80915.1"/>
    <property type="molecule type" value="mRNA"/>
</dbReference>
<dbReference type="CCDS" id="CCDS3270.1">
    <molecule id="O43283-1"/>
</dbReference>
<dbReference type="CCDS" id="CCDS56298.1">
    <molecule id="O43283-5"/>
</dbReference>
<dbReference type="PIR" id="I38218">
    <property type="entry name" value="I38218"/>
</dbReference>
<dbReference type="RefSeq" id="NP_001229243.1">
    <molecule id="O43283-1"/>
    <property type="nucleotide sequence ID" value="NM_001242314.2"/>
</dbReference>
<dbReference type="RefSeq" id="NP_001229246.1">
    <molecule id="O43283-5"/>
    <property type="nucleotide sequence ID" value="NM_001242317.2"/>
</dbReference>
<dbReference type="RefSeq" id="NP_004712.1">
    <molecule id="O43283-1"/>
    <property type="nucleotide sequence ID" value="NM_004721.5"/>
</dbReference>
<dbReference type="RefSeq" id="XP_011511612.1">
    <molecule id="O43283-1"/>
    <property type="nucleotide sequence ID" value="XM_011513310.3"/>
</dbReference>
<dbReference type="RefSeq" id="XP_016862945.1">
    <molecule id="O43283-1"/>
    <property type="nucleotide sequence ID" value="XM_017007456.2"/>
</dbReference>
<dbReference type="RefSeq" id="XP_047305149.1">
    <molecule id="O43283-1"/>
    <property type="nucleotide sequence ID" value="XM_047449193.1"/>
</dbReference>
<dbReference type="RefSeq" id="XP_054204332.1">
    <molecule id="O43283-1"/>
    <property type="nucleotide sequence ID" value="XM_054348357.1"/>
</dbReference>
<dbReference type="RefSeq" id="XP_054204333.1">
    <molecule id="O43283-1"/>
    <property type="nucleotide sequence ID" value="XM_054348358.1"/>
</dbReference>
<dbReference type="RefSeq" id="XP_054204334.1">
    <molecule id="O43283-1"/>
    <property type="nucleotide sequence ID" value="XM_054348359.1"/>
</dbReference>
<dbReference type="SMR" id="O43283"/>
<dbReference type="BioGRID" id="114614">
    <property type="interactions" value="45"/>
</dbReference>
<dbReference type="FunCoup" id="O43283">
    <property type="interactions" value="655"/>
</dbReference>
<dbReference type="IntAct" id="O43283">
    <property type="interactions" value="27"/>
</dbReference>
<dbReference type="STRING" id="9606.ENSP00000265026"/>
<dbReference type="BindingDB" id="O43283"/>
<dbReference type="ChEMBL" id="CHEMBL1163124"/>
<dbReference type="DrugBank" id="DB12010">
    <property type="generic name" value="Fostamatinib"/>
</dbReference>
<dbReference type="DrugCentral" id="O43283"/>
<dbReference type="GuidetoPHARMACOLOGY" id="2073"/>
<dbReference type="GlyGen" id="O43283">
    <property type="glycosylation" value="3 sites, 1 O-linked glycan (1 site)"/>
</dbReference>
<dbReference type="iPTMnet" id="O43283"/>
<dbReference type="PhosphoSitePlus" id="O43283"/>
<dbReference type="BioMuta" id="MAP3K13"/>
<dbReference type="jPOST" id="O43283"/>
<dbReference type="MassIVE" id="O43283"/>
<dbReference type="PaxDb" id="9606-ENSP00000265026"/>
<dbReference type="PeptideAtlas" id="O43283"/>
<dbReference type="ProteomicsDB" id="48852">
    <molecule id="O43283-1"/>
</dbReference>
<dbReference type="ProteomicsDB" id="48853">
    <molecule id="O43283-3"/>
</dbReference>
<dbReference type="ProteomicsDB" id="48854">
    <molecule id="O43283-4"/>
</dbReference>
<dbReference type="ProteomicsDB" id="48855">
    <molecule id="O43283-5"/>
</dbReference>
<dbReference type="ProteomicsDB" id="48856">
    <molecule id="O43283-6"/>
</dbReference>
<dbReference type="Antibodypedia" id="33834">
    <property type="antibodies" value="299 antibodies from 28 providers"/>
</dbReference>
<dbReference type="DNASU" id="9175"/>
<dbReference type="Ensembl" id="ENST00000265026.8">
    <molecule id="O43283-1"/>
    <property type="protein sequence ID" value="ENSP00000265026.3"/>
    <property type="gene ID" value="ENSG00000073803.14"/>
</dbReference>
<dbReference type="Ensembl" id="ENST00000424227.5">
    <molecule id="O43283-1"/>
    <property type="protein sequence ID" value="ENSP00000399910.1"/>
    <property type="gene ID" value="ENSG00000073803.14"/>
</dbReference>
<dbReference type="Ensembl" id="ENST00000433092.5">
    <molecule id="O43283-6"/>
    <property type="protein sequence ID" value="ENSP00000389798.1"/>
    <property type="gene ID" value="ENSG00000073803.14"/>
</dbReference>
<dbReference type="Ensembl" id="ENST00000438053.5">
    <molecule id="O43283-3"/>
    <property type="protein sequence ID" value="ENSP00000403561.1"/>
    <property type="gene ID" value="ENSG00000073803.14"/>
</dbReference>
<dbReference type="Ensembl" id="ENST00000443863.5">
    <molecule id="O43283-4"/>
    <property type="protein sequence ID" value="ENSP00000409325.1"/>
    <property type="gene ID" value="ENSG00000073803.14"/>
</dbReference>
<dbReference type="Ensembl" id="ENST00000446828.5">
    <molecule id="O43283-5"/>
    <property type="protein sequence ID" value="ENSP00000411483.1"/>
    <property type="gene ID" value="ENSG00000073803.14"/>
</dbReference>
<dbReference type="GeneID" id="9175"/>
<dbReference type="KEGG" id="hsa:9175"/>
<dbReference type="MANE-Select" id="ENST00000265026.8">
    <property type="protein sequence ID" value="ENSP00000265026.3"/>
    <property type="RefSeq nucleotide sequence ID" value="NM_004721.5"/>
    <property type="RefSeq protein sequence ID" value="NP_004712.1"/>
</dbReference>
<dbReference type="UCSC" id="uc003fph.5">
    <molecule id="O43283-1"/>
    <property type="organism name" value="human"/>
</dbReference>
<dbReference type="AGR" id="HGNC:6852"/>
<dbReference type="CTD" id="9175"/>
<dbReference type="DisGeNET" id="9175"/>
<dbReference type="GeneCards" id="MAP3K13"/>
<dbReference type="HGNC" id="HGNC:6852">
    <property type="gene designation" value="MAP3K13"/>
</dbReference>
<dbReference type="HPA" id="ENSG00000073803">
    <property type="expression patterns" value="Low tissue specificity"/>
</dbReference>
<dbReference type="MalaCards" id="MAP3K13"/>
<dbReference type="MIM" id="604915">
    <property type="type" value="gene"/>
</dbReference>
<dbReference type="neXtProt" id="NX_O43283"/>
<dbReference type="OpenTargets" id="ENSG00000073803"/>
<dbReference type="PharmGKB" id="PA30596"/>
<dbReference type="VEuPathDB" id="HostDB:ENSG00000073803"/>
<dbReference type="eggNOG" id="KOG4721">
    <property type="taxonomic scope" value="Eukaryota"/>
</dbReference>
<dbReference type="GeneTree" id="ENSGT00940000158216"/>
<dbReference type="HOGENOM" id="CLU_1869795_0_0_1"/>
<dbReference type="InParanoid" id="O43283"/>
<dbReference type="OMA" id="CAEDRGY"/>
<dbReference type="OrthoDB" id="339325at2759"/>
<dbReference type="PAN-GO" id="O43283">
    <property type="GO annotations" value="2 GO annotations based on evolutionary models"/>
</dbReference>
<dbReference type="PhylomeDB" id="O43283"/>
<dbReference type="TreeFam" id="TF105119"/>
<dbReference type="PathwayCommons" id="O43283"/>
<dbReference type="SignaLink" id="O43283"/>
<dbReference type="SIGNOR" id="O43283"/>
<dbReference type="BioGRID-ORCS" id="9175">
    <property type="hits" value="15 hits in 1191 CRISPR screens"/>
</dbReference>
<dbReference type="ChiTaRS" id="MAP3K13">
    <property type="organism name" value="human"/>
</dbReference>
<dbReference type="GeneWiki" id="MAP3K13"/>
<dbReference type="GenomeRNAi" id="9175"/>
<dbReference type="Pharos" id="O43283">
    <property type="development level" value="Tchem"/>
</dbReference>
<dbReference type="PRO" id="PR:O43283"/>
<dbReference type="Proteomes" id="UP000005640">
    <property type="component" value="Chromosome 3"/>
</dbReference>
<dbReference type="RNAct" id="O43283">
    <property type="molecule type" value="protein"/>
</dbReference>
<dbReference type="Bgee" id="ENSG00000073803">
    <property type="expression patterns" value="Expressed in corpus epididymis and 201 other cell types or tissues"/>
</dbReference>
<dbReference type="ExpressionAtlas" id="O43283">
    <property type="expression patterns" value="baseline and differential"/>
</dbReference>
<dbReference type="GO" id="GO:0005737">
    <property type="term" value="C:cytoplasm"/>
    <property type="evidence" value="ECO:0000318"/>
    <property type="project" value="GO_Central"/>
</dbReference>
<dbReference type="GO" id="GO:0016020">
    <property type="term" value="C:membrane"/>
    <property type="evidence" value="ECO:0000314"/>
    <property type="project" value="UniProtKB"/>
</dbReference>
<dbReference type="GO" id="GO:0005524">
    <property type="term" value="F:ATP binding"/>
    <property type="evidence" value="ECO:0007669"/>
    <property type="project" value="UniProtKB-KW"/>
</dbReference>
<dbReference type="GO" id="GO:0019899">
    <property type="term" value="F:enzyme binding"/>
    <property type="evidence" value="ECO:0000353"/>
    <property type="project" value="UniProtKB"/>
</dbReference>
<dbReference type="GO" id="GO:0042802">
    <property type="term" value="F:identical protein binding"/>
    <property type="evidence" value="ECO:0000353"/>
    <property type="project" value="IntAct"/>
</dbReference>
<dbReference type="GO" id="GO:0106137">
    <property type="term" value="F:IkappaB kinase complex binding"/>
    <property type="evidence" value="ECO:0000314"/>
    <property type="project" value="UniProtKB"/>
</dbReference>
<dbReference type="GO" id="GO:0004709">
    <property type="term" value="F:MAP kinase kinase kinase activity"/>
    <property type="evidence" value="ECO:0000314"/>
    <property type="project" value="UniProtKB"/>
</dbReference>
<dbReference type="GO" id="GO:0046872">
    <property type="term" value="F:metal ion binding"/>
    <property type="evidence" value="ECO:0007669"/>
    <property type="project" value="UniProtKB-KW"/>
</dbReference>
<dbReference type="GO" id="GO:0042803">
    <property type="term" value="F:protein homodimerization activity"/>
    <property type="evidence" value="ECO:0000314"/>
    <property type="project" value="UniProtKB"/>
</dbReference>
<dbReference type="GO" id="GO:0019901">
    <property type="term" value="F:protein kinase binding"/>
    <property type="evidence" value="ECO:0000250"/>
    <property type="project" value="UniProtKB"/>
</dbReference>
<dbReference type="GO" id="GO:0106310">
    <property type="term" value="F:protein serine kinase activity"/>
    <property type="evidence" value="ECO:0007669"/>
    <property type="project" value="RHEA"/>
</dbReference>
<dbReference type="GO" id="GO:0043539">
    <property type="term" value="F:protein serine/threonine kinase activator activity"/>
    <property type="evidence" value="ECO:0000250"/>
    <property type="project" value="ARUK-UCL"/>
</dbReference>
<dbReference type="GO" id="GO:0004674">
    <property type="term" value="F:protein serine/threonine kinase activity"/>
    <property type="evidence" value="ECO:0000314"/>
    <property type="project" value="UniProtKB"/>
</dbReference>
<dbReference type="GO" id="GO:0007254">
    <property type="term" value="P:JNK cascade"/>
    <property type="evidence" value="ECO:0000314"/>
    <property type="project" value="UniProtKB"/>
</dbReference>
<dbReference type="GO" id="GO:0045773">
    <property type="term" value="P:positive regulation of axon extension"/>
    <property type="evidence" value="ECO:0000250"/>
    <property type="project" value="ARUK-UCL"/>
</dbReference>
<dbReference type="GO" id="GO:1905492">
    <property type="term" value="P:positive regulation of branching morphogenesis of a nerve"/>
    <property type="evidence" value="ECO:0000250"/>
    <property type="project" value="ARUK-UCL"/>
</dbReference>
<dbReference type="GO" id="GO:0014042">
    <property type="term" value="P:positive regulation of neuron maturation"/>
    <property type="evidence" value="ECO:0000250"/>
    <property type="project" value="ARUK-UCL"/>
</dbReference>
<dbReference type="GO" id="GO:0150012">
    <property type="term" value="P:positive regulation of neuron projection arborization"/>
    <property type="evidence" value="ECO:0000250"/>
    <property type="project" value="ARUK-UCL"/>
</dbReference>
<dbReference type="GO" id="GO:0051092">
    <property type="term" value="P:positive regulation of NF-kappaB transcription factor activity"/>
    <property type="evidence" value="ECO:0000314"/>
    <property type="project" value="UniProtKB"/>
</dbReference>
<dbReference type="GO" id="GO:0046777">
    <property type="term" value="P:protein autophosphorylation"/>
    <property type="evidence" value="ECO:0000314"/>
    <property type="project" value="UniProtKB"/>
</dbReference>
<dbReference type="GO" id="GO:0006468">
    <property type="term" value="P:protein phosphorylation"/>
    <property type="evidence" value="ECO:0000314"/>
    <property type="project" value="UniProtKB"/>
</dbReference>
<dbReference type="GO" id="GO:0051403">
    <property type="term" value="P:stress-activated MAPK cascade"/>
    <property type="evidence" value="ECO:0000314"/>
    <property type="project" value="UniProtKB"/>
</dbReference>
<dbReference type="CDD" id="cd14059">
    <property type="entry name" value="STKc_MAP3K12_13"/>
    <property type="match status" value="1"/>
</dbReference>
<dbReference type="FunFam" id="1.10.510.10:FF:000087">
    <property type="entry name" value="Mitogen-activated protein kinase kinase kinase 12"/>
    <property type="match status" value="1"/>
</dbReference>
<dbReference type="FunFam" id="3.30.200.20:FF:000095">
    <property type="entry name" value="Mitogen-activated protein kinase kinase kinase 12"/>
    <property type="match status" value="1"/>
</dbReference>
<dbReference type="Gene3D" id="3.30.200.20">
    <property type="entry name" value="Phosphorylase Kinase, domain 1"/>
    <property type="match status" value="1"/>
</dbReference>
<dbReference type="Gene3D" id="1.10.510.10">
    <property type="entry name" value="Transferase(Phosphotransferase) domain 1"/>
    <property type="match status" value="1"/>
</dbReference>
<dbReference type="InterPro" id="IPR011009">
    <property type="entry name" value="Kinase-like_dom_sf"/>
</dbReference>
<dbReference type="InterPro" id="IPR017419">
    <property type="entry name" value="MAP3K12_MAP3K13"/>
</dbReference>
<dbReference type="InterPro" id="IPR027258">
    <property type="entry name" value="MAPKKK13"/>
</dbReference>
<dbReference type="InterPro" id="IPR000719">
    <property type="entry name" value="Prot_kinase_dom"/>
</dbReference>
<dbReference type="InterPro" id="IPR001245">
    <property type="entry name" value="Ser-Thr/Tyr_kinase_cat_dom"/>
</dbReference>
<dbReference type="InterPro" id="IPR008271">
    <property type="entry name" value="Ser/Thr_kinase_AS"/>
</dbReference>
<dbReference type="InterPro" id="IPR051681">
    <property type="entry name" value="Ser/Thr_Kinases-Pseudokinases"/>
</dbReference>
<dbReference type="PANTHER" id="PTHR44329:SF14">
    <property type="entry name" value="MITOGEN-ACTIVATED PROTEIN KINASE KINASE KINASE 13"/>
    <property type="match status" value="1"/>
</dbReference>
<dbReference type="PANTHER" id="PTHR44329">
    <property type="entry name" value="SERINE/THREONINE-PROTEIN KINASE TNNI3K-RELATED"/>
    <property type="match status" value="1"/>
</dbReference>
<dbReference type="Pfam" id="PF07714">
    <property type="entry name" value="PK_Tyr_Ser-Thr"/>
    <property type="match status" value="1"/>
</dbReference>
<dbReference type="PIRSF" id="PIRSF038165">
    <property type="entry name" value="MAPKKK12_MAPKKK13"/>
    <property type="match status" value="1"/>
</dbReference>
<dbReference type="PIRSF" id="PIRSF500742">
    <property type="entry name" value="MAPKKK13"/>
    <property type="match status" value="1"/>
</dbReference>
<dbReference type="PRINTS" id="PR00109">
    <property type="entry name" value="TYRKINASE"/>
</dbReference>
<dbReference type="SMART" id="SM00220">
    <property type="entry name" value="S_TKc"/>
    <property type="match status" value="1"/>
</dbReference>
<dbReference type="SUPFAM" id="SSF56112">
    <property type="entry name" value="Protein kinase-like (PK-like)"/>
    <property type="match status" value="1"/>
</dbReference>
<dbReference type="PROSITE" id="PS50011">
    <property type="entry name" value="PROTEIN_KINASE_DOM"/>
    <property type="match status" value="1"/>
</dbReference>
<dbReference type="PROSITE" id="PS00108">
    <property type="entry name" value="PROTEIN_KINASE_ST"/>
    <property type="match status" value="1"/>
</dbReference>
<protein>
    <recommendedName>
        <fullName>Mitogen-activated protein kinase kinase kinase 13</fullName>
        <ecNumber>2.7.11.25</ecNumber>
    </recommendedName>
    <alternativeName>
        <fullName>Leucine zipper-bearing kinase</fullName>
    </alternativeName>
    <alternativeName>
        <fullName>Mixed lineage kinase</fullName>
        <shortName>MLK</shortName>
    </alternativeName>
</protein>
<name>M3K13_HUMAN</name>
<keyword id="KW-0025">Alternative splicing</keyword>
<keyword id="KW-0067">ATP-binding</keyword>
<keyword id="KW-0963">Cytoplasm</keyword>
<keyword id="KW-0418">Kinase</keyword>
<keyword id="KW-0460">Magnesium</keyword>
<keyword id="KW-0472">Membrane</keyword>
<keyword id="KW-0479">Metal-binding</keyword>
<keyword id="KW-0547">Nucleotide-binding</keyword>
<keyword id="KW-0597">Phosphoprotein</keyword>
<keyword id="KW-1267">Proteomics identification</keyword>
<keyword id="KW-1185">Reference proteome</keyword>
<keyword id="KW-0677">Repeat</keyword>
<keyword id="KW-0723">Serine/threonine-protein kinase</keyword>
<keyword id="KW-0808">Transferase</keyword>
<comment type="function">
    <text evidence="7 8 10">Activates the JUN N-terminal pathway through activation of the MAP kinase kinase MAP2K7. Acts synergistically with PRDX3 to regulate the activation of NF-kappa-B in the cytosol. This activation is kinase-dependent and involves activating the IKK complex, the IKBKB-containing complex that phosphorylates inhibitors of NF-kappa-B.</text>
</comment>
<comment type="catalytic activity">
    <reaction evidence="10">
        <text>L-seryl-[protein] + ATP = O-phospho-L-seryl-[protein] + ADP + H(+)</text>
        <dbReference type="Rhea" id="RHEA:17989"/>
        <dbReference type="Rhea" id="RHEA-COMP:9863"/>
        <dbReference type="Rhea" id="RHEA-COMP:11604"/>
        <dbReference type="ChEBI" id="CHEBI:15378"/>
        <dbReference type="ChEBI" id="CHEBI:29999"/>
        <dbReference type="ChEBI" id="CHEBI:30616"/>
        <dbReference type="ChEBI" id="CHEBI:83421"/>
        <dbReference type="ChEBI" id="CHEBI:456216"/>
        <dbReference type="EC" id="2.7.11.25"/>
    </reaction>
</comment>
<comment type="catalytic activity">
    <reaction evidence="10">
        <text>L-threonyl-[protein] + ATP = O-phospho-L-threonyl-[protein] + ADP + H(+)</text>
        <dbReference type="Rhea" id="RHEA:46608"/>
        <dbReference type="Rhea" id="RHEA-COMP:11060"/>
        <dbReference type="Rhea" id="RHEA-COMP:11605"/>
        <dbReference type="ChEBI" id="CHEBI:15378"/>
        <dbReference type="ChEBI" id="CHEBI:30013"/>
        <dbReference type="ChEBI" id="CHEBI:30616"/>
        <dbReference type="ChEBI" id="CHEBI:61977"/>
        <dbReference type="ChEBI" id="CHEBI:456216"/>
        <dbReference type="EC" id="2.7.11.25"/>
    </reaction>
</comment>
<comment type="cofactor">
    <cofactor evidence="2">
        <name>Mg(2+)</name>
        <dbReference type="ChEBI" id="CHEBI:18420"/>
    </cofactor>
</comment>
<comment type="activity regulation">
    <text evidence="6 10">Activated by autophosphorylation and homodimerization.</text>
</comment>
<comment type="subunit">
    <text evidence="6 7 8">Homodimer; forms dimers through the leucine-zipper motif. Interacts with the C-terminus of MAPK8IP1 through the kinase catalytic domain. Binds PRDX3. Associates with the IKK complex through the kinase domain.</text>
</comment>
<comment type="interaction">
    <interactant intactId="EBI-1168480">
        <id>O43283</id>
    </interactant>
    <interactant intactId="EBI-1168480">
        <id>O43283</id>
        <label>MAP3K13</label>
    </interactant>
    <organismsDiffer>false</organismsDiffer>
    <experiments>2</experiments>
</comment>
<comment type="subcellular location">
    <subcellularLocation>
        <location evidence="10">Cytoplasm</location>
    </subcellularLocation>
    <subcellularLocation>
        <location evidence="10">Membrane</location>
        <topology evidence="10">Peripheral membrane protein</topology>
    </subcellularLocation>
</comment>
<comment type="alternative products">
    <event type="alternative splicing"/>
    <isoform>
        <id>O43283-1</id>
        <name>1</name>
        <sequence type="displayed"/>
    </isoform>
    <isoform>
        <id>O43283-3</id>
        <name>2</name>
        <sequence type="described" ref="VSP_036567 VSP_036568"/>
    </isoform>
    <isoform>
        <id>O43283-4</id>
        <name>3</name>
        <sequence type="described" ref="VSP_036563 VSP_036566"/>
    </isoform>
    <isoform>
        <id>O43283-5</id>
        <name>4</name>
        <sequence type="described" ref="VSP_036562 VSP_036569"/>
    </isoform>
    <isoform>
        <id>O43283-6</id>
        <name>5</name>
        <sequence type="described" ref="VSP_036564 VSP_036565"/>
    </isoform>
</comment>
<comment type="tissue specificity">
    <text evidence="10">Expressed in the adult brain, liver, placenta and pancreas, with expression strongest in the pancreas.</text>
</comment>
<comment type="PTM">
    <text evidence="10">Autophosphorylated on serine and threonine residues.</text>
</comment>
<comment type="miscellaneous">
    <molecule>Isoform 2</molecule>
    <text evidence="13">May be produced at very low levels due to a premature stop codon in the mRNA, leading to nonsense-mediated mRNA decay.</text>
</comment>
<comment type="similarity">
    <text evidence="13">Belongs to the protein kinase superfamily. STE Ser/Thr protein kinase family. MAP kinase kinase kinase subfamily.</text>
</comment>
<comment type="sequence caution" evidence="13">
    <conflict type="erroneous translation">
        <sequence resource="EMBL-CDS" id="AAI11727"/>
    </conflict>
    <text>Wrong choice of CDS.</text>
</comment>
<comment type="sequence caution" evidence="13">
    <conflict type="erroneous termination">
        <sequence resource="EMBL-CDS" id="BAG59505"/>
    </conflict>
    <text>Truncated C-terminus.</text>
</comment>
<gene>
    <name evidence="15" type="primary">MAP3K13</name>
    <name evidence="14" type="synonym">LZK</name>
</gene>